<accession>Q08BH7</accession>
<accession>F1R970</accession>
<sequence length="194" mass="21891">MQRVSRLKREMQLLTAEPPPGVSCWQSEGRLDELQAQIVGGANTPYEGGVFTLEINIPERYPFEPPKMRFLTPIYHPNIDNAGRICLDALKLPPKGAWRPSLNISTVLTSIQLLMAEPNPDDPLMADISSEFKYNKPLYLEKAKKWTAEHAIQKNKGCVETDGKTPENKNLKTSHKREALSAQENLEHTKKVCL</sequence>
<gene>
    <name type="primary">ube2t</name>
    <name type="ORF">zgc:153687</name>
</gene>
<evidence type="ECO:0000250" key="1">
    <source>
        <dbReference type="UniProtKB" id="Q9NPD8"/>
    </source>
</evidence>
<evidence type="ECO:0000255" key="2">
    <source>
        <dbReference type="PROSITE-ProRule" id="PRU00388"/>
    </source>
</evidence>
<evidence type="ECO:0000255" key="3">
    <source>
        <dbReference type="PROSITE-ProRule" id="PRU10133"/>
    </source>
</evidence>
<evidence type="ECO:0000256" key="4">
    <source>
        <dbReference type="SAM" id="MobiDB-lite"/>
    </source>
</evidence>
<proteinExistence type="evidence at transcript level"/>
<feature type="chain" id="PRO_0000416880" description="Ubiquitin-conjugating enzyme E2 T">
    <location>
        <begin position="1"/>
        <end position="194"/>
    </location>
</feature>
<feature type="domain" description="UBC core" evidence="2">
    <location>
        <begin position="2"/>
        <end position="152"/>
    </location>
</feature>
<feature type="region of interest" description="Disordered" evidence="4">
    <location>
        <begin position="158"/>
        <end position="194"/>
    </location>
</feature>
<feature type="compositionally biased region" description="Basic and acidic residues" evidence="4">
    <location>
        <begin position="158"/>
        <end position="170"/>
    </location>
</feature>
<feature type="compositionally biased region" description="Basic and acidic residues" evidence="4">
    <location>
        <begin position="185"/>
        <end position="194"/>
    </location>
</feature>
<feature type="active site" description="Glycyl thioester intermediate" evidence="2 3">
    <location>
        <position position="86"/>
    </location>
</feature>
<organism>
    <name type="scientific">Danio rerio</name>
    <name type="common">Zebrafish</name>
    <name type="synonym">Brachydanio rerio</name>
    <dbReference type="NCBI Taxonomy" id="7955"/>
    <lineage>
        <taxon>Eukaryota</taxon>
        <taxon>Metazoa</taxon>
        <taxon>Chordata</taxon>
        <taxon>Craniata</taxon>
        <taxon>Vertebrata</taxon>
        <taxon>Euteleostomi</taxon>
        <taxon>Actinopterygii</taxon>
        <taxon>Neopterygii</taxon>
        <taxon>Teleostei</taxon>
        <taxon>Ostariophysi</taxon>
        <taxon>Cypriniformes</taxon>
        <taxon>Danionidae</taxon>
        <taxon>Danioninae</taxon>
        <taxon>Danio</taxon>
    </lineage>
</organism>
<comment type="function">
    <text evidence="1">Accepts ubiquitin from the E1 complex and catalyzes its covalent attachment to other proteins. Catalyzes monoubiquitination. Involved in DNA repair.</text>
</comment>
<comment type="catalytic activity">
    <reaction evidence="2 3">
        <text>S-ubiquitinyl-[E1 ubiquitin-activating enzyme]-L-cysteine + [E2 ubiquitin-conjugating enzyme]-L-cysteine = [E1 ubiquitin-activating enzyme]-L-cysteine + S-ubiquitinyl-[E2 ubiquitin-conjugating enzyme]-L-cysteine.</text>
        <dbReference type="EC" id="2.3.2.23"/>
    </reaction>
</comment>
<comment type="pathway">
    <text evidence="2">Protein modification; protein ubiquitination.</text>
</comment>
<comment type="subcellular location">
    <subcellularLocation>
        <location evidence="1">Nucleus</location>
    </subcellularLocation>
    <text evidence="1">Accumulates to chromatin.</text>
</comment>
<comment type="similarity">
    <text evidence="2">Belongs to the ubiquitin-conjugating enzyme family.</text>
</comment>
<reference key="1">
    <citation type="journal article" date="2013" name="Nature">
        <title>The zebrafish reference genome sequence and its relationship to the human genome.</title>
        <authorList>
            <person name="Howe K."/>
            <person name="Clark M.D."/>
            <person name="Torroja C.F."/>
            <person name="Torrance J."/>
            <person name="Berthelot C."/>
            <person name="Muffato M."/>
            <person name="Collins J.E."/>
            <person name="Humphray S."/>
            <person name="McLaren K."/>
            <person name="Matthews L."/>
            <person name="McLaren S."/>
            <person name="Sealy I."/>
            <person name="Caccamo M."/>
            <person name="Churcher C."/>
            <person name="Scott C."/>
            <person name="Barrett J.C."/>
            <person name="Koch R."/>
            <person name="Rauch G.J."/>
            <person name="White S."/>
            <person name="Chow W."/>
            <person name="Kilian B."/>
            <person name="Quintais L.T."/>
            <person name="Guerra-Assuncao J.A."/>
            <person name="Zhou Y."/>
            <person name="Gu Y."/>
            <person name="Yen J."/>
            <person name="Vogel J.H."/>
            <person name="Eyre T."/>
            <person name="Redmond S."/>
            <person name="Banerjee R."/>
            <person name="Chi J."/>
            <person name="Fu B."/>
            <person name="Langley E."/>
            <person name="Maguire S.F."/>
            <person name="Laird G.K."/>
            <person name="Lloyd D."/>
            <person name="Kenyon E."/>
            <person name="Donaldson S."/>
            <person name="Sehra H."/>
            <person name="Almeida-King J."/>
            <person name="Loveland J."/>
            <person name="Trevanion S."/>
            <person name="Jones M."/>
            <person name="Quail M."/>
            <person name="Willey D."/>
            <person name="Hunt A."/>
            <person name="Burton J."/>
            <person name="Sims S."/>
            <person name="McLay K."/>
            <person name="Plumb B."/>
            <person name="Davis J."/>
            <person name="Clee C."/>
            <person name="Oliver K."/>
            <person name="Clark R."/>
            <person name="Riddle C."/>
            <person name="Elliot D."/>
            <person name="Threadgold G."/>
            <person name="Harden G."/>
            <person name="Ware D."/>
            <person name="Begum S."/>
            <person name="Mortimore B."/>
            <person name="Kerry G."/>
            <person name="Heath P."/>
            <person name="Phillimore B."/>
            <person name="Tracey A."/>
            <person name="Corby N."/>
            <person name="Dunn M."/>
            <person name="Johnson C."/>
            <person name="Wood J."/>
            <person name="Clark S."/>
            <person name="Pelan S."/>
            <person name="Griffiths G."/>
            <person name="Smith M."/>
            <person name="Glithero R."/>
            <person name="Howden P."/>
            <person name="Barker N."/>
            <person name="Lloyd C."/>
            <person name="Stevens C."/>
            <person name="Harley J."/>
            <person name="Holt K."/>
            <person name="Panagiotidis G."/>
            <person name="Lovell J."/>
            <person name="Beasley H."/>
            <person name="Henderson C."/>
            <person name="Gordon D."/>
            <person name="Auger K."/>
            <person name="Wright D."/>
            <person name="Collins J."/>
            <person name="Raisen C."/>
            <person name="Dyer L."/>
            <person name="Leung K."/>
            <person name="Robertson L."/>
            <person name="Ambridge K."/>
            <person name="Leongamornlert D."/>
            <person name="McGuire S."/>
            <person name="Gilderthorp R."/>
            <person name="Griffiths C."/>
            <person name="Manthravadi D."/>
            <person name="Nichol S."/>
            <person name="Barker G."/>
            <person name="Whitehead S."/>
            <person name="Kay M."/>
            <person name="Brown J."/>
            <person name="Murnane C."/>
            <person name="Gray E."/>
            <person name="Humphries M."/>
            <person name="Sycamore N."/>
            <person name="Barker D."/>
            <person name="Saunders D."/>
            <person name="Wallis J."/>
            <person name="Babbage A."/>
            <person name="Hammond S."/>
            <person name="Mashreghi-Mohammadi M."/>
            <person name="Barr L."/>
            <person name="Martin S."/>
            <person name="Wray P."/>
            <person name="Ellington A."/>
            <person name="Matthews N."/>
            <person name="Ellwood M."/>
            <person name="Woodmansey R."/>
            <person name="Clark G."/>
            <person name="Cooper J."/>
            <person name="Tromans A."/>
            <person name="Grafham D."/>
            <person name="Skuce C."/>
            <person name="Pandian R."/>
            <person name="Andrews R."/>
            <person name="Harrison E."/>
            <person name="Kimberley A."/>
            <person name="Garnett J."/>
            <person name="Fosker N."/>
            <person name="Hall R."/>
            <person name="Garner P."/>
            <person name="Kelly D."/>
            <person name="Bird C."/>
            <person name="Palmer S."/>
            <person name="Gehring I."/>
            <person name="Berger A."/>
            <person name="Dooley C.M."/>
            <person name="Ersan-Urun Z."/>
            <person name="Eser C."/>
            <person name="Geiger H."/>
            <person name="Geisler M."/>
            <person name="Karotki L."/>
            <person name="Kirn A."/>
            <person name="Konantz J."/>
            <person name="Konantz M."/>
            <person name="Oberlander M."/>
            <person name="Rudolph-Geiger S."/>
            <person name="Teucke M."/>
            <person name="Lanz C."/>
            <person name="Raddatz G."/>
            <person name="Osoegawa K."/>
            <person name="Zhu B."/>
            <person name="Rapp A."/>
            <person name="Widaa S."/>
            <person name="Langford C."/>
            <person name="Yang F."/>
            <person name="Schuster S.C."/>
            <person name="Carter N.P."/>
            <person name="Harrow J."/>
            <person name="Ning Z."/>
            <person name="Herrero J."/>
            <person name="Searle S.M."/>
            <person name="Enright A."/>
            <person name="Geisler R."/>
            <person name="Plasterk R.H."/>
            <person name="Lee C."/>
            <person name="Westerfield M."/>
            <person name="de Jong P.J."/>
            <person name="Zon L.I."/>
            <person name="Postlethwait J.H."/>
            <person name="Nusslein-Volhard C."/>
            <person name="Hubbard T.J."/>
            <person name="Roest Crollius H."/>
            <person name="Rogers J."/>
            <person name="Stemple D.L."/>
        </authorList>
    </citation>
    <scope>NUCLEOTIDE SEQUENCE [LARGE SCALE GENOMIC DNA]</scope>
    <source>
        <strain>Tuebingen</strain>
    </source>
</reference>
<reference key="2">
    <citation type="submission" date="2006-10" db="EMBL/GenBank/DDBJ databases">
        <authorList>
            <consortium name="NIH - Zebrafish Gene Collection (ZGC) project"/>
        </authorList>
    </citation>
    <scope>NUCLEOTIDE SEQUENCE [LARGE SCALE MRNA]</scope>
    <source>
        <tissue>Ovary</tissue>
    </source>
</reference>
<keyword id="KW-0067">ATP-binding</keyword>
<keyword id="KW-0227">DNA damage</keyword>
<keyword id="KW-0234">DNA repair</keyword>
<keyword id="KW-0547">Nucleotide-binding</keyword>
<keyword id="KW-0539">Nucleus</keyword>
<keyword id="KW-1185">Reference proteome</keyword>
<keyword id="KW-0808">Transferase</keyword>
<keyword id="KW-0833">Ubl conjugation pathway</keyword>
<protein>
    <recommendedName>
        <fullName>Ubiquitin-conjugating enzyme E2 T</fullName>
        <ecNumber>2.3.2.23</ecNumber>
    </recommendedName>
    <alternativeName>
        <fullName>E2 ubiquitin-conjugating enzyme T</fullName>
    </alternativeName>
    <alternativeName>
        <fullName>Ubiquitin carrier protein T</fullName>
    </alternativeName>
    <alternativeName>
        <fullName>Ubiquitin-protein ligase T</fullName>
    </alternativeName>
</protein>
<dbReference type="EC" id="2.3.2.23"/>
<dbReference type="EMBL" id="CABZ01030035">
    <property type="status" value="NOT_ANNOTATED_CDS"/>
    <property type="molecule type" value="Genomic_DNA"/>
</dbReference>
<dbReference type="EMBL" id="BC124718">
    <property type="protein sequence ID" value="AAI24719.1"/>
    <property type="molecule type" value="mRNA"/>
</dbReference>
<dbReference type="RefSeq" id="NP_001070763.1">
    <property type="nucleotide sequence ID" value="NM_001077295.2"/>
</dbReference>
<dbReference type="SMR" id="Q08BH7"/>
<dbReference type="FunCoup" id="Q08BH7">
    <property type="interactions" value="665"/>
</dbReference>
<dbReference type="STRING" id="7955.ENSDARP00000107045"/>
<dbReference type="PaxDb" id="7955-ENSDARP00000107045"/>
<dbReference type="GeneID" id="768152"/>
<dbReference type="KEGG" id="dre:768152"/>
<dbReference type="AGR" id="ZFIN:ZDB-GENE-061013-547"/>
<dbReference type="CTD" id="29089"/>
<dbReference type="ZFIN" id="ZDB-GENE-061013-547">
    <property type="gene designation" value="ube2t"/>
</dbReference>
<dbReference type="eggNOG" id="KOG0417">
    <property type="taxonomic scope" value="Eukaryota"/>
</dbReference>
<dbReference type="InParanoid" id="Q08BH7"/>
<dbReference type="OrthoDB" id="9978460at2759"/>
<dbReference type="PhylomeDB" id="Q08BH7"/>
<dbReference type="Reactome" id="R-DRE-8866652">
    <property type="pathway name" value="Synthesis of active ubiquitin: roles of E1 and E2 enzymes"/>
</dbReference>
<dbReference type="UniPathway" id="UPA00143"/>
<dbReference type="PRO" id="PR:Q08BH7"/>
<dbReference type="Proteomes" id="UP000000437">
    <property type="component" value="Chromosome 23"/>
</dbReference>
<dbReference type="GO" id="GO:0005634">
    <property type="term" value="C:nucleus"/>
    <property type="evidence" value="ECO:0000318"/>
    <property type="project" value="GO_Central"/>
</dbReference>
<dbReference type="GO" id="GO:0005524">
    <property type="term" value="F:ATP binding"/>
    <property type="evidence" value="ECO:0007669"/>
    <property type="project" value="UniProtKB-KW"/>
</dbReference>
<dbReference type="GO" id="GO:0003682">
    <property type="term" value="F:chromatin binding"/>
    <property type="evidence" value="ECO:0000250"/>
    <property type="project" value="UniProtKB"/>
</dbReference>
<dbReference type="GO" id="GO:0061631">
    <property type="term" value="F:ubiquitin conjugating enzyme activity"/>
    <property type="evidence" value="ECO:0000318"/>
    <property type="project" value="GO_Central"/>
</dbReference>
<dbReference type="GO" id="GO:0004842">
    <property type="term" value="F:ubiquitin-protein transferase activity"/>
    <property type="evidence" value="ECO:0000250"/>
    <property type="project" value="UniProtKB"/>
</dbReference>
<dbReference type="GO" id="GO:0006974">
    <property type="term" value="P:DNA damage response"/>
    <property type="evidence" value="ECO:0000250"/>
    <property type="project" value="UniProtKB"/>
</dbReference>
<dbReference type="GO" id="GO:0006281">
    <property type="term" value="P:DNA repair"/>
    <property type="evidence" value="ECO:0000250"/>
    <property type="project" value="UniProtKB"/>
</dbReference>
<dbReference type="GO" id="GO:0051865">
    <property type="term" value="P:protein autoubiquitination"/>
    <property type="evidence" value="ECO:0000250"/>
    <property type="project" value="UniProtKB"/>
</dbReference>
<dbReference type="GO" id="GO:0006513">
    <property type="term" value="P:protein monoubiquitination"/>
    <property type="evidence" value="ECO:0000250"/>
    <property type="project" value="UniProtKB"/>
</dbReference>
<dbReference type="GO" id="GO:0000209">
    <property type="term" value="P:protein polyubiquitination"/>
    <property type="evidence" value="ECO:0000318"/>
    <property type="project" value="GO_Central"/>
</dbReference>
<dbReference type="CDD" id="cd23805">
    <property type="entry name" value="UBCc_UBE2T"/>
    <property type="match status" value="1"/>
</dbReference>
<dbReference type="FunFam" id="3.10.110.10:FF:000041">
    <property type="entry name" value="Ubiquitin-conjugating enzyme E2 T"/>
    <property type="match status" value="1"/>
</dbReference>
<dbReference type="Gene3D" id="3.10.110.10">
    <property type="entry name" value="Ubiquitin Conjugating Enzyme"/>
    <property type="match status" value="1"/>
</dbReference>
<dbReference type="InterPro" id="IPR050113">
    <property type="entry name" value="Ub_conjugating_enzyme"/>
</dbReference>
<dbReference type="InterPro" id="IPR000608">
    <property type="entry name" value="UBQ-conjugat_E2_core"/>
</dbReference>
<dbReference type="InterPro" id="IPR023313">
    <property type="entry name" value="UBQ-conjugating_AS"/>
</dbReference>
<dbReference type="InterPro" id="IPR016135">
    <property type="entry name" value="UBQ-conjugating_enzyme/RWD"/>
</dbReference>
<dbReference type="PANTHER" id="PTHR24067">
    <property type="entry name" value="UBIQUITIN-CONJUGATING ENZYME E2"/>
    <property type="match status" value="1"/>
</dbReference>
<dbReference type="Pfam" id="PF00179">
    <property type="entry name" value="UQ_con"/>
    <property type="match status" value="1"/>
</dbReference>
<dbReference type="SMART" id="SM00212">
    <property type="entry name" value="UBCc"/>
    <property type="match status" value="1"/>
</dbReference>
<dbReference type="SUPFAM" id="SSF54495">
    <property type="entry name" value="UBC-like"/>
    <property type="match status" value="1"/>
</dbReference>
<dbReference type="PROSITE" id="PS00183">
    <property type="entry name" value="UBC_1"/>
    <property type="match status" value="1"/>
</dbReference>
<dbReference type="PROSITE" id="PS50127">
    <property type="entry name" value="UBC_2"/>
    <property type="match status" value="1"/>
</dbReference>
<name>UBE2T_DANRE</name>